<gene>
    <name type="primary">scpl-3</name>
    <name type="ORF">Y47D9A.2</name>
</gene>
<sequence length="287" mass="33163">MSNVTPKLVWPEDDYVDESLLEDHQGPARLEYDALVMLANLPPLTEEIMSRCPALPVKTRSTPEYTLVLDLDETLVHCSLTPLDNATMVFPVVFQNITYQVYVRLRPHLRTFLSRMAKTFEIIIFTASKKVYANKLCDILDPRKNHIRHRLFREHCVCVFGNYVKDLTILGRDPSKTMILDNAVQSFAYQLDNGIPIESWFHDRNDTELLKLCSFLEAIPTLGRDVREILRHKYRLRDHIPFYSIIHQQEGPGRLPLLEVAPPPVTEPNDEQLITQVVQKHPQLVQG</sequence>
<feature type="chain" id="PRO_0000331474" description="CTD small phosphatase-like protein 3">
    <location>
        <begin position="1"/>
        <end position="287"/>
    </location>
</feature>
<feature type="domain" description="FCP1 homology" evidence="2">
    <location>
        <begin position="60"/>
        <end position="219"/>
    </location>
</feature>
<feature type="splice variant" id="VSP_033225" description="In isoform b." evidence="3">
    <original>L</original>
    <variation>LVNFHFEIKVKTNSICLAILSSNNFQ</variation>
    <location>
        <position position="222"/>
    </location>
</feature>
<organism>
    <name type="scientific">Caenorhabditis elegans</name>
    <dbReference type="NCBI Taxonomy" id="6239"/>
    <lineage>
        <taxon>Eukaryota</taxon>
        <taxon>Metazoa</taxon>
        <taxon>Ecdysozoa</taxon>
        <taxon>Nematoda</taxon>
        <taxon>Chromadorea</taxon>
        <taxon>Rhabditida</taxon>
        <taxon>Rhabditina</taxon>
        <taxon>Rhabditomorpha</taxon>
        <taxon>Rhabditoidea</taxon>
        <taxon>Rhabditidae</taxon>
        <taxon>Peloderinae</taxon>
        <taxon>Caenorhabditis</taxon>
    </lineage>
</organism>
<name>SCPL3_CAEEL</name>
<comment type="function">
    <text evidence="1">Probable phosphatase.</text>
</comment>
<comment type="alternative products">
    <event type="alternative splicing"/>
    <isoform>
        <id>Q9N4V4-1</id>
        <name>a</name>
        <sequence type="displayed"/>
    </isoform>
    <isoform>
        <id>Q9N4V4-2</id>
        <name>b</name>
        <sequence type="described" ref="VSP_033225"/>
    </isoform>
</comment>
<comment type="similarity">
    <text evidence="3">Belongs to the CTDSPL2 family.</text>
</comment>
<protein>
    <recommendedName>
        <fullName>CTD small phosphatase-like protein 3</fullName>
        <shortName>CTDSP-like 3</shortName>
        <ecNumber>3.1.3.-</ecNumber>
    </recommendedName>
</protein>
<accession>Q9N4V4</accession>
<accession>Q86S75</accession>
<evidence type="ECO:0000250" key="1"/>
<evidence type="ECO:0000255" key="2">
    <source>
        <dbReference type="PROSITE-ProRule" id="PRU00336"/>
    </source>
</evidence>
<evidence type="ECO:0000305" key="3"/>
<reference key="1">
    <citation type="journal article" date="1998" name="Science">
        <title>Genome sequence of the nematode C. elegans: a platform for investigating biology.</title>
        <authorList>
            <consortium name="The C. elegans sequencing consortium"/>
        </authorList>
    </citation>
    <scope>NUCLEOTIDE SEQUENCE [LARGE SCALE GENOMIC DNA]</scope>
    <scope>ALTERNATIVE SPLICING</scope>
    <source>
        <strain>Bristol N2</strain>
    </source>
</reference>
<keyword id="KW-0025">Alternative splicing</keyword>
<keyword id="KW-0378">Hydrolase</keyword>
<keyword id="KW-0904">Protein phosphatase</keyword>
<keyword id="KW-1185">Reference proteome</keyword>
<proteinExistence type="inferred from homology"/>
<dbReference type="EC" id="3.1.3.-"/>
<dbReference type="EMBL" id="FO080843">
    <property type="protein sequence ID" value="CCD67161.1"/>
    <property type="molecule type" value="Genomic_DNA"/>
</dbReference>
<dbReference type="EMBL" id="FO080843">
    <property type="protein sequence ID" value="CCD67162.1"/>
    <property type="molecule type" value="Genomic_DNA"/>
</dbReference>
<dbReference type="RefSeq" id="NP_001379798.1">
    <molecule id="Q9N4V4-1"/>
    <property type="nucleotide sequence ID" value="NM_001392135.1"/>
</dbReference>
<dbReference type="RefSeq" id="NP_491348.1">
    <property type="nucleotide sequence ID" value="NM_058947.5"/>
</dbReference>
<dbReference type="SMR" id="Q9N4V4"/>
<dbReference type="BioGRID" id="37502">
    <property type="interactions" value="2"/>
</dbReference>
<dbReference type="FunCoup" id="Q9N4V4">
    <property type="interactions" value="431"/>
</dbReference>
<dbReference type="IntAct" id="Q9N4V4">
    <property type="interactions" value="1"/>
</dbReference>
<dbReference type="STRING" id="6239.Y47D9A.2a.1"/>
<dbReference type="PaxDb" id="6239-Y47D9A.2b"/>
<dbReference type="EnsemblMetazoa" id="Y47D9A.2a.1">
    <molecule id="Q9N4V4-1"/>
    <property type="protein sequence ID" value="Y47D9A.2a.1"/>
    <property type="gene ID" value="WBGene00021629"/>
</dbReference>
<dbReference type="GeneID" id="172032"/>
<dbReference type="UCSC" id="Y47D9A.2b">
    <molecule id="Q9N4V4-1"/>
    <property type="organism name" value="c. elegans"/>
</dbReference>
<dbReference type="AGR" id="WB:WBGene00021629"/>
<dbReference type="WormBase" id="Y47D9A.2a">
    <molecule id="Q9N4V4-1"/>
    <property type="protein sequence ID" value="CE22072"/>
    <property type="gene ID" value="WBGene00021629"/>
    <property type="gene designation" value="scpl-3"/>
</dbReference>
<dbReference type="eggNOG" id="KOG1605">
    <property type="taxonomic scope" value="Eukaryota"/>
</dbReference>
<dbReference type="GeneTree" id="ENSGT01040000240503"/>
<dbReference type="HOGENOM" id="CLU_020262_4_1_1"/>
<dbReference type="InParanoid" id="Q9N4V4"/>
<dbReference type="OrthoDB" id="277011at2759"/>
<dbReference type="PhylomeDB" id="Q9N4V4"/>
<dbReference type="PRO" id="PR:Q9N4V4"/>
<dbReference type="Proteomes" id="UP000001940">
    <property type="component" value="Chromosome I"/>
</dbReference>
<dbReference type="Bgee" id="WBGene00021629">
    <property type="expression patterns" value="Expressed in pharyngeal muscle cell (C elegans) and 4 other cell types or tissues"/>
</dbReference>
<dbReference type="ExpressionAtlas" id="Q9N4V4">
    <property type="expression patterns" value="baseline and differential"/>
</dbReference>
<dbReference type="GO" id="GO:0004721">
    <property type="term" value="F:phosphoprotein phosphatase activity"/>
    <property type="evidence" value="ECO:0000318"/>
    <property type="project" value="GO_Central"/>
</dbReference>
<dbReference type="CDD" id="cd07521">
    <property type="entry name" value="HAD_FCP1-like"/>
    <property type="match status" value="1"/>
</dbReference>
<dbReference type="FunFam" id="3.40.50.1000:FF:000015">
    <property type="entry name" value="CTD small phosphatase-like protein 2"/>
    <property type="match status" value="1"/>
</dbReference>
<dbReference type="Gene3D" id="3.40.50.1000">
    <property type="entry name" value="HAD superfamily/HAD-like"/>
    <property type="match status" value="1"/>
</dbReference>
<dbReference type="InterPro" id="IPR011948">
    <property type="entry name" value="Dullard_phosphatase"/>
</dbReference>
<dbReference type="InterPro" id="IPR004274">
    <property type="entry name" value="FCP1_dom"/>
</dbReference>
<dbReference type="InterPro" id="IPR036412">
    <property type="entry name" value="HAD-like_sf"/>
</dbReference>
<dbReference type="InterPro" id="IPR023214">
    <property type="entry name" value="HAD_sf"/>
</dbReference>
<dbReference type="InterPro" id="IPR050365">
    <property type="entry name" value="TIM50"/>
</dbReference>
<dbReference type="NCBIfam" id="TIGR02251">
    <property type="entry name" value="HIF-SF_euk"/>
    <property type="match status" value="1"/>
</dbReference>
<dbReference type="PANTHER" id="PTHR12210">
    <property type="entry name" value="DULLARD PROTEIN PHOSPHATASE"/>
    <property type="match status" value="1"/>
</dbReference>
<dbReference type="Pfam" id="PF03031">
    <property type="entry name" value="NIF"/>
    <property type="match status" value="1"/>
</dbReference>
<dbReference type="SMART" id="SM00577">
    <property type="entry name" value="CPDc"/>
    <property type="match status" value="1"/>
</dbReference>
<dbReference type="SUPFAM" id="SSF56784">
    <property type="entry name" value="HAD-like"/>
    <property type="match status" value="1"/>
</dbReference>
<dbReference type="PROSITE" id="PS50969">
    <property type="entry name" value="FCP1"/>
    <property type="match status" value="1"/>
</dbReference>